<gene>
    <name type="ordered locus">Bamb_0738</name>
</gene>
<protein>
    <recommendedName>
        <fullName evidence="1">Putative pre-16S rRNA nuclease</fullName>
        <ecNumber evidence="1">3.1.-.-</ecNumber>
    </recommendedName>
</protein>
<organism>
    <name type="scientific">Burkholderia ambifaria (strain ATCC BAA-244 / DSM 16087 / CCUG 44356 / LMG 19182 / AMMD)</name>
    <name type="common">Burkholderia cepacia (strain AMMD)</name>
    <dbReference type="NCBI Taxonomy" id="339670"/>
    <lineage>
        <taxon>Bacteria</taxon>
        <taxon>Pseudomonadati</taxon>
        <taxon>Pseudomonadota</taxon>
        <taxon>Betaproteobacteria</taxon>
        <taxon>Burkholderiales</taxon>
        <taxon>Burkholderiaceae</taxon>
        <taxon>Burkholderia</taxon>
        <taxon>Burkholderia cepacia complex</taxon>
    </lineage>
</organism>
<evidence type="ECO:0000255" key="1">
    <source>
        <dbReference type="HAMAP-Rule" id="MF_00651"/>
    </source>
</evidence>
<name>YQGF_BURCM</name>
<comment type="function">
    <text evidence="1">Could be a nuclease involved in processing of the 5'-end of pre-16S rRNA.</text>
</comment>
<comment type="subcellular location">
    <subcellularLocation>
        <location evidence="1">Cytoplasm</location>
    </subcellularLocation>
</comment>
<comment type="similarity">
    <text evidence="1">Belongs to the YqgF nuclease family.</text>
</comment>
<reference key="1">
    <citation type="submission" date="2006-08" db="EMBL/GenBank/DDBJ databases">
        <title>Complete sequence of chromosome 1 of Burkholderia cepacia AMMD.</title>
        <authorList>
            <person name="Copeland A."/>
            <person name="Lucas S."/>
            <person name="Lapidus A."/>
            <person name="Barry K."/>
            <person name="Detter J.C."/>
            <person name="Glavina del Rio T."/>
            <person name="Hammon N."/>
            <person name="Israni S."/>
            <person name="Pitluck S."/>
            <person name="Bruce D."/>
            <person name="Chain P."/>
            <person name="Malfatti S."/>
            <person name="Shin M."/>
            <person name="Vergez L."/>
            <person name="Schmutz J."/>
            <person name="Larimer F."/>
            <person name="Land M."/>
            <person name="Hauser L."/>
            <person name="Kyrpides N."/>
            <person name="Kim E."/>
            <person name="Parke J."/>
            <person name="Coenye T."/>
            <person name="Konstantinidis K."/>
            <person name="Ramette A."/>
            <person name="Tiedje J."/>
            <person name="Richardson P."/>
        </authorList>
    </citation>
    <scope>NUCLEOTIDE SEQUENCE [LARGE SCALE GENOMIC DNA]</scope>
    <source>
        <strain>ATCC BAA-244 / DSM 16087 / CCUG 44356 / LMG 19182 / AMMD</strain>
    </source>
</reference>
<accession>Q0BHS6</accession>
<keyword id="KW-0963">Cytoplasm</keyword>
<keyword id="KW-0378">Hydrolase</keyword>
<keyword id="KW-0540">Nuclease</keyword>
<keyword id="KW-0690">Ribosome biogenesis</keyword>
<proteinExistence type="inferred from homology"/>
<feature type="chain" id="PRO_1000061492" description="Putative pre-16S rRNA nuclease">
    <location>
        <begin position="1"/>
        <end position="149"/>
    </location>
</feature>
<dbReference type="EC" id="3.1.-.-" evidence="1"/>
<dbReference type="EMBL" id="CP000440">
    <property type="protein sequence ID" value="ABI86297.1"/>
    <property type="molecule type" value="Genomic_DNA"/>
</dbReference>
<dbReference type="SMR" id="Q0BHS6"/>
<dbReference type="KEGG" id="bam:Bamb_0738"/>
<dbReference type="PATRIC" id="fig|339670.21.peg.856"/>
<dbReference type="eggNOG" id="COG0816">
    <property type="taxonomic scope" value="Bacteria"/>
</dbReference>
<dbReference type="Proteomes" id="UP000000662">
    <property type="component" value="Chromosome 1"/>
</dbReference>
<dbReference type="GO" id="GO:0005829">
    <property type="term" value="C:cytosol"/>
    <property type="evidence" value="ECO:0007669"/>
    <property type="project" value="TreeGrafter"/>
</dbReference>
<dbReference type="GO" id="GO:0004518">
    <property type="term" value="F:nuclease activity"/>
    <property type="evidence" value="ECO:0007669"/>
    <property type="project" value="UniProtKB-KW"/>
</dbReference>
<dbReference type="GO" id="GO:0000967">
    <property type="term" value="P:rRNA 5'-end processing"/>
    <property type="evidence" value="ECO:0007669"/>
    <property type="project" value="UniProtKB-UniRule"/>
</dbReference>
<dbReference type="CDD" id="cd16964">
    <property type="entry name" value="YqgF"/>
    <property type="match status" value="1"/>
</dbReference>
<dbReference type="Gene3D" id="3.30.420.140">
    <property type="entry name" value="YqgF/RNase H-like domain"/>
    <property type="match status" value="1"/>
</dbReference>
<dbReference type="HAMAP" id="MF_00651">
    <property type="entry name" value="Nuclease_YqgF"/>
    <property type="match status" value="1"/>
</dbReference>
<dbReference type="InterPro" id="IPR012337">
    <property type="entry name" value="RNaseH-like_sf"/>
</dbReference>
<dbReference type="InterPro" id="IPR005227">
    <property type="entry name" value="YqgF"/>
</dbReference>
<dbReference type="InterPro" id="IPR006641">
    <property type="entry name" value="YqgF/RNaseH-like_dom"/>
</dbReference>
<dbReference type="InterPro" id="IPR037027">
    <property type="entry name" value="YqgF/RNaseH-like_dom_sf"/>
</dbReference>
<dbReference type="NCBIfam" id="TIGR00250">
    <property type="entry name" value="RNAse_H_YqgF"/>
    <property type="match status" value="1"/>
</dbReference>
<dbReference type="PANTHER" id="PTHR33317">
    <property type="entry name" value="POLYNUCLEOTIDYL TRANSFERASE, RIBONUCLEASE H-LIKE SUPERFAMILY PROTEIN"/>
    <property type="match status" value="1"/>
</dbReference>
<dbReference type="PANTHER" id="PTHR33317:SF4">
    <property type="entry name" value="POLYNUCLEOTIDYL TRANSFERASE, RIBONUCLEASE H-LIKE SUPERFAMILY PROTEIN"/>
    <property type="match status" value="1"/>
</dbReference>
<dbReference type="Pfam" id="PF03652">
    <property type="entry name" value="RuvX"/>
    <property type="match status" value="1"/>
</dbReference>
<dbReference type="SMART" id="SM00732">
    <property type="entry name" value="YqgFc"/>
    <property type="match status" value="1"/>
</dbReference>
<dbReference type="SUPFAM" id="SSF53098">
    <property type="entry name" value="Ribonuclease H-like"/>
    <property type="match status" value="1"/>
</dbReference>
<sequence>MSGASARDATLLGFDYGEKRIGVAIGNALTRSARALVVIPNLNREHRFKAVGDLLAEWRPDALVVGLPMHPDGTPHEMTQQAKRFGNQLNGRFGLPVTWVDERYSSVEAEAGLRERNVRGRARAEMLDAEAARVILQQYLDQLSDHEHH</sequence>